<feature type="chain" id="PRO_1000019627" description="Serine--tRNA ligase">
    <location>
        <begin position="1"/>
        <end position="433"/>
    </location>
</feature>
<feature type="binding site" evidence="1">
    <location>
        <begin position="235"/>
        <end position="237"/>
    </location>
    <ligand>
        <name>L-serine</name>
        <dbReference type="ChEBI" id="CHEBI:33384"/>
    </ligand>
</feature>
<feature type="binding site" evidence="1">
    <location>
        <begin position="266"/>
        <end position="268"/>
    </location>
    <ligand>
        <name>ATP</name>
        <dbReference type="ChEBI" id="CHEBI:30616"/>
    </ligand>
</feature>
<feature type="binding site" evidence="1">
    <location>
        <position position="289"/>
    </location>
    <ligand>
        <name>L-serine</name>
        <dbReference type="ChEBI" id="CHEBI:33384"/>
    </ligand>
</feature>
<feature type="binding site" evidence="1">
    <location>
        <begin position="353"/>
        <end position="356"/>
    </location>
    <ligand>
        <name>ATP</name>
        <dbReference type="ChEBI" id="CHEBI:30616"/>
    </ligand>
</feature>
<feature type="binding site" evidence="1">
    <location>
        <position position="388"/>
    </location>
    <ligand>
        <name>L-serine</name>
        <dbReference type="ChEBI" id="CHEBI:33384"/>
    </ligand>
</feature>
<gene>
    <name evidence="1" type="primary">serS</name>
    <name type="ordered locus">Bcen2424_0979</name>
</gene>
<reference key="1">
    <citation type="submission" date="2006-08" db="EMBL/GenBank/DDBJ databases">
        <title>Complete sequence of chromosome 1 of Burkholderia cenocepacia HI2424.</title>
        <authorList>
            <person name="Copeland A."/>
            <person name="Lucas S."/>
            <person name="Lapidus A."/>
            <person name="Barry K."/>
            <person name="Detter J.C."/>
            <person name="Glavina del Rio T."/>
            <person name="Hammon N."/>
            <person name="Israni S."/>
            <person name="Pitluck S."/>
            <person name="Chain P."/>
            <person name="Malfatti S."/>
            <person name="Shin M."/>
            <person name="Vergez L."/>
            <person name="Schmutz J."/>
            <person name="Larimer F."/>
            <person name="Land M."/>
            <person name="Hauser L."/>
            <person name="Kyrpides N."/>
            <person name="Kim E."/>
            <person name="LiPuma J.J."/>
            <person name="Gonzalez C.F."/>
            <person name="Konstantinidis K."/>
            <person name="Tiedje J.M."/>
            <person name="Richardson P."/>
        </authorList>
    </citation>
    <scope>NUCLEOTIDE SEQUENCE [LARGE SCALE GENOMIC DNA]</scope>
    <source>
        <strain>HI2424</strain>
    </source>
</reference>
<accession>A0K5F5</accession>
<evidence type="ECO:0000255" key="1">
    <source>
        <dbReference type="HAMAP-Rule" id="MF_00176"/>
    </source>
</evidence>
<proteinExistence type="inferred from homology"/>
<sequence length="433" mass="47501">MLDIQLLRKDLDGVAKRLADRGYTLDVAAFSALEAERRAIQTHTEELQARRNSLSKQIGAMKGKGEDTSAVMAEVGGIGDDMKASEAKLGEIQARLSDLMLGMPNVAHESVPVGKDEADNVEARRWGTPRQFDFEVKDHVDVGTPLGLDFETGAKLAGARFTMLRGPIARLHRALAQFMIDTHTQQHGYTETYTPYIVNPEILYGTGQLPKFADDMFRVEKGGAENTVTQYLISTSEISLTNTVRESIVDASALPIKLTAHSPCFRSEAGSYGRDTRGMIRQHQFDKVEMVQVVAPETSYAALDEMVGHAEAILQKLGLPYRVITLCTGDMGFSAAKTFDLEVWLPAQNTYREISSCSNTEAFQARRMQARFRNAQGKPELVHTLNGSGLAVGRTLVAVLENYQNADGSVTVPEVLRPYMGGMERIDAPAQAS</sequence>
<comment type="function">
    <text evidence="1">Catalyzes the attachment of serine to tRNA(Ser). Is also able to aminoacylate tRNA(Sec) with serine, to form the misacylated tRNA L-seryl-tRNA(Sec), which will be further converted into selenocysteinyl-tRNA(Sec).</text>
</comment>
<comment type="catalytic activity">
    <reaction evidence="1">
        <text>tRNA(Ser) + L-serine + ATP = L-seryl-tRNA(Ser) + AMP + diphosphate + H(+)</text>
        <dbReference type="Rhea" id="RHEA:12292"/>
        <dbReference type="Rhea" id="RHEA-COMP:9669"/>
        <dbReference type="Rhea" id="RHEA-COMP:9703"/>
        <dbReference type="ChEBI" id="CHEBI:15378"/>
        <dbReference type="ChEBI" id="CHEBI:30616"/>
        <dbReference type="ChEBI" id="CHEBI:33019"/>
        <dbReference type="ChEBI" id="CHEBI:33384"/>
        <dbReference type="ChEBI" id="CHEBI:78442"/>
        <dbReference type="ChEBI" id="CHEBI:78533"/>
        <dbReference type="ChEBI" id="CHEBI:456215"/>
        <dbReference type="EC" id="6.1.1.11"/>
    </reaction>
</comment>
<comment type="catalytic activity">
    <reaction evidence="1">
        <text>tRNA(Sec) + L-serine + ATP = L-seryl-tRNA(Sec) + AMP + diphosphate + H(+)</text>
        <dbReference type="Rhea" id="RHEA:42580"/>
        <dbReference type="Rhea" id="RHEA-COMP:9742"/>
        <dbReference type="Rhea" id="RHEA-COMP:10128"/>
        <dbReference type="ChEBI" id="CHEBI:15378"/>
        <dbReference type="ChEBI" id="CHEBI:30616"/>
        <dbReference type="ChEBI" id="CHEBI:33019"/>
        <dbReference type="ChEBI" id="CHEBI:33384"/>
        <dbReference type="ChEBI" id="CHEBI:78442"/>
        <dbReference type="ChEBI" id="CHEBI:78533"/>
        <dbReference type="ChEBI" id="CHEBI:456215"/>
        <dbReference type="EC" id="6.1.1.11"/>
    </reaction>
</comment>
<comment type="pathway">
    <text evidence="1">Aminoacyl-tRNA biosynthesis; selenocysteinyl-tRNA(Sec) biosynthesis; L-seryl-tRNA(Sec) from L-serine and tRNA(Sec): step 1/1.</text>
</comment>
<comment type="subunit">
    <text evidence="1">Homodimer. The tRNA molecule binds across the dimer.</text>
</comment>
<comment type="subcellular location">
    <subcellularLocation>
        <location evidence="1">Cytoplasm</location>
    </subcellularLocation>
</comment>
<comment type="domain">
    <text evidence="1">Consists of two distinct domains, a catalytic core and a N-terminal extension that is involved in tRNA binding.</text>
</comment>
<comment type="similarity">
    <text evidence="1">Belongs to the class-II aminoacyl-tRNA synthetase family. Type-1 seryl-tRNA synthetase subfamily.</text>
</comment>
<organism>
    <name type="scientific">Burkholderia cenocepacia (strain HI2424)</name>
    <dbReference type="NCBI Taxonomy" id="331272"/>
    <lineage>
        <taxon>Bacteria</taxon>
        <taxon>Pseudomonadati</taxon>
        <taxon>Pseudomonadota</taxon>
        <taxon>Betaproteobacteria</taxon>
        <taxon>Burkholderiales</taxon>
        <taxon>Burkholderiaceae</taxon>
        <taxon>Burkholderia</taxon>
        <taxon>Burkholderia cepacia complex</taxon>
    </lineage>
</organism>
<keyword id="KW-0030">Aminoacyl-tRNA synthetase</keyword>
<keyword id="KW-0067">ATP-binding</keyword>
<keyword id="KW-0963">Cytoplasm</keyword>
<keyword id="KW-0436">Ligase</keyword>
<keyword id="KW-0547">Nucleotide-binding</keyword>
<keyword id="KW-0648">Protein biosynthesis</keyword>
<name>SYS_BURCH</name>
<protein>
    <recommendedName>
        <fullName evidence="1">Serine--tRNA ligase</fullName>
        <ecNumber evidence="1">6.1.1.11</ecNumber>
    </recommendedName>
    <alternativeName>
        <fullName evidence="1">Seryl-tRNA synthetase</fullName>
        <shortName evidence="1">SerRS</shortName>
    </alternativeName>
    <alternativeName>
        <fullName evidence="1">Seryl-tRNA(Ser/Sec) synthetase</fullName>
    </alternativeName>
</protein>
<dbReference type="EC" id="6.1.1.11" evidence="1"/>
<dbReference type="EMBL" id="CP000458">
    <property type="protein sequence ID" value="ABK07732.1"/>
    <property type="molecule type" value="Genomic_DNA"/>
</dbReference>
<dbReference type="RefSeq" id="WP_011544835.1">
    <property type="nucleotide sequence ID" value="NC_008542.1"/>
</dbReference>
<dbReference type="SMR" id="A0K5F5"/>
<dbReference type="KEGG" id="bch:Bcen2424_0979"/>
<dbReference type="HOGENOM" id="CLU_023797_1_1_4"/>
<dbReference type="UniPathway" id="UPA00906">
    <property type="reaction ID" value="UER00895"/>
</dbReference>
<dbReference type="GO" id="GO:0005737">
    <property type="term" value="C:cytoplasm"/>
    <property type="evidence" value="ECO:0007669"/>
    <property type="project" value="UniProtKB-SubCell"/>
</dbReference>
<dbReference type="GO" id="GO:0005524">
    <property type="term" value="F:ATP binding"/>
    <property type="evidence" value="ECO:0007669"/>
    <property type="project" value="UniProtKB-UniRule"/>
</dbReference>
<dbReference type="GO" id="GO:0004828">
    <property type="term" value="F:serine-tRNA ligase activity"/>
    <property type="evidence" value="ECO:0007669"/>
    <property type="project" value="UniProtKB-UniRule"/>
</dbReference>
<dbReference type="GO" id="GO:0016260">
    <property type="term" value="P:selenocysteine biosynthetic process"/>
    <property type="evidence" value="ECO:0007669"/>
    <property type="project" value="UniProtKB-UniRule"/>
</dbReference>
<dbReference type="GO" id="GO:0006434">
    <property type="term" value="P:seryl-tRNA aminoacylation"/>
    <property type="evidence" value="ECO:0007669"/>
    <property type="project" value="UniProtKB-UniRule"/>
</dbReference>
<dbReference type="CDD" id="cd00770">
    <property type="entry name" value="SerRS_core"/>
    <property type="match status" value="1"/>
</dbReference>
<dbReference type="Gene3D" id="3.30.930.10">
    <property type="entry name" value="Bira Bifunctional Protein, Domain 2"/>
    <property type="match status" value="1"/>
</dbReference>
<dbReference type="Gene3D" id="1.10.287.40">
    <property type="entry name" value="Serine-tRNA synthetase, tRNA binding domain"/>
    <property type="match status" value="1"/>
</dbReference>
<dbReference type="HAMAP" id="MF_00176">
    <property type="entry name" value="Ser_tRNA_synth_type1"/>
    <property type="match status" value="1"/>
</dbReference>
<dbReference type="InterPro" id="IPR002314">
    <property type="entry name" value="aa-tRNA-synt_IIb"/>
</dbReference>
<dbReference type="InterPro" id="IPR006195">
    <property type="entry name" value="aa-tRNA-synth_II"/>
</dbReference>
<dbReference type="InterPro" id="IPR045864">
    <property type="entry name" value="aa-tRNA-synth_II/BPL/LPL"/>
</dbReference>
<dbReference type="InterPro" id="IPR002317">
    <property type="entry name" value="Ser-tRNA-ligase_type_1"/>
</dbReference>
<dbReference type="InterPro" id="IPR015866">
    <property type="entry name" value="Ser-tRNA-synth_1_N"/>
</dbReference>
<dbReference type="InterPro" id="IPR042103">
    <property type="entry name" value="SerRS_1_N_sf"/>
</dbReference>
<dbReference type="InterPro" id="IPR033729">
    <property type="entry name" value="SerRS_core"/>
</dbReference>
<dbReference type="InterPro" id="IPR010978">
    <property type="entry name" value="tRNA-bd_arm"/>
</dbReference>
<dbReference type="NCBIfam" id="TIGR00414">
    <property type="entry name" value="serS"/>
    <property type="match status" value="1"/>
</dbReference>
<dbReference type="PANTHER" id="PTHR43697:SF1">
    <property type="entry name" value="SERINE--TRNA LIGASE"/>
    <property type="match status" value="1"/>
</dbReference>
<dbReference type="PANTHER" id="PTHR43697">
    <property type="entry name" value="SERYL-TRNA SYNTHETASE"/>
    <property type="match status" value="1"/>
</dbReference>
<dbReference type="Pfam" id="PF02403">
    <property type="entry name" value="Seryl_tRNA_N"/>
    <property type="match status" value="1"/>
</dbReference>
<dbReference type="Pfam" id="PF00587">
    <property type="entry name" value="tRNA-synt_2b"/>
    <property type="match status" value="1"/>
</dbReference>
<dbReference type="PIRSF" id="PIRSF001529">
    <property type="entry name" value="Ser-tRNA-synth_IIa"/>
    <property type="match status" value="1"/>
</dbReference>
<dbReference type="PRINTS" id="PR00981">
    <property type="entry name" value="TRNASYNTHSER"/>
</dbReference>
<dbReference type="SUPFAM" id="SSF55681">
    <property type="entry name" value="Class II aaRS and biotin synthetases"/>
    <property type="match status" value="1"/>
</dbReference>
<dbReference type="SUPFAM" id="SSF46589">
    <property type="entry name" value="tRNA-binding arm"/>
    <property type="match status" value="1"/>
</dbReference>
<dbReference type="PROSITE" id="PS50862">
    <property type="entry name" value="AA_TRNA_LIGASE_II"/>
    <property type="match status" value="1"/>
</dbReference>